<sequence>MANSPVMNVEVLRYNPEIDQEPHLSTYQVPYDNQTSLLDALGYIKDKLEPSLSYRWSCRMAICGSCGMMVNNKPKLACKTFLRDYSGHMRIEPLANFPIERDLVVDLSHFIESLEAIKPYIIGNEAPALDGKPHPSKELQVSRTKQTPAQLEKYRQFSMCINCGLCYAACPQFGLNPEFLGPAAITMAHRYNLDNRDHGKAKRMSLLNGKNGVWSCTFVGYCSEVCPKHVDPASAINQGKVESAKDYVISMLKPKG</sequence>
<keyword id="KW-0001">2Fe-2S</keyword>
<keyword id="KW-0003">3Fe-4S</keyword>
<keyword id="KW-0004">4Fe-4S</keyword>
<keyword id="KW-0997">Cell inner membrane</keyword>
<keyword id="KW-1003">Cell membrane</keyword>
<keyword id="KW-0249">Electron transport</keyword>
<keyword id="KW-0408">Iron</keyword>
<keyword id="KW-0411">Iron-sulfur</keyword>
<keyword id="KW-0472">Membrane</keyword>
<keyword id="KW-0479">Metal-binding</keyword>
<keyword id="KW-0560">Oxidoreductase</keyword>
<keyword id="KW-1185">Reference proteome</keyword>
<keyword id="KW-0813">Transport</keyword>
<keyword id="KW-0816">Tricarboxylic acid cycle</keyword>
<reference key="1">
    <citation type="journal article" date="1995" name="Science">
        <title>Whole-genome random sequencing and assembly of Haemophilus influenzae Rd.</title>
        <authorList>
            <person name="Fleischmann R.D."/>
            <person name="Adams M.D."/>
            <person name="White O."/>
            <person name="Clayton R.A."/>
            <person name="Kirkness E.F."/>
            <person name="Kerlavage A.R."/>
            <person name="Bult C.J."/>
            <person name="Tomb J.-F."/>
            <person name="Dougherty B.A."/>
            <person name="Merrick J.M."/>
            <person name="McKenney K."/>
            <person name="Sutton G.G."/>
            <person name="FitzHugh W."/>
            <person name="Fields C.A."/>
            <person name="Gocayne J.D."/>
            <person name="Scott J.D."/>
            <person name="Shirley R."/>
            <person name="Liu L.-I."/>
            <person name="Glodek A."/>
            <person name="Kelley J.M."/>
            <person name="Weidman J.F."/>
            <person name="Phillips C.A."/>
            <person name="Spriggs T."/>
            <person name="Hedblom E."/>
            <person name="Cotton M.D."/>
            <person name="Utterback T.R."/>
            <person name="Hanna M.C."/>
            <person name="Nguyen D.T."/>
            <person name="Saudek D.M."/>
            <person name="Brandon R.C."/>
            <person name="Fine L.D."/>
            <person name="Fritchman J.L."/>
            <person name="Fuhrmann J.L."/>
            <person name="Geoghagen N.S.M."/>
            <person name="Gnehm C.L."/>
            <person name="McDonald L.A."/>
            <person name="Small K.V."/>
            <person name="Fraser C.M."/>
            <person name="Smith H.O."/>
            <person name="Venter J.C."/>
        </authorList>
    </citation>
    <scope>NUCLEOTIDE SEQUENCE [LARGE SCALE GENOMIC DNA]</scope>
    <source>
        <strain>ATCC 51907 / DSM 11121 / KW20 / Rd</strain>
    </source>
</reference>
<organism>
    <name type="scientific">Haemophilus influenzae (strain ATCC 51907 / DSM 11121 / KW20 / Rd)</name>
    <dbReference type="NCBI Taxonomy" id="71421"/>
    <lineage>
        <taxon>Bacteria</taxon>
        <taxon>Pseudomonadati</taxon>
        <taxon>Pseudomonadota</taxon>
        <taxon>Gammaproteobacteria</taxon>
        <taxon>Pasteurellales</taxon>
        <taxon>Pasteurellaceae</taxon>
        <taxon>Haemophilus</taxon>
    </lineage>
</organism>
<evidence type="ECO:0000250" key="1">
    <source>
        <dbReference type="UniProtKB" id="P0AC47"/>
    </source>
</evidence>
<evidence type="ECO:0000255" key="2">
    <source>
        <dbReference type="PROSITE-ProRule" id="PRU00465"/>
    </source>
</evidence>
<evidence type="ECO:0000255" key="3">
    <source>
        <dbReference type="PROSITE-ProRule" id="PRU00711"/>
    </source>
</evidence>
<evidence type="ECO:0000305" key="4"/>
<name>FRDB_HAEIN</name>
<proteinExistence type="inferred from homology"/>
<accession>P44893</accession>
<feature type="chain" id="PRO_0000158702" description="Fumarate reductase iron-sulfur subunit">
    <location>
        <begin position="1"/>
        <end position="256"/>
    </location>
</feature>
<feature type="domain" description="2Fe-2S ferredoxin-type" evidence="2">
    <location>
        <begin position="7"/>
        <end position="97"/>
    </location>
</feature>
<feature type="domain" description="4Fe-4S ferredoxin-type" evidence="3">
    <location>
        <begin position="151"/>
        <end position="180"/>
    </location>
</feature>
<feature type="binding site" evidence="1">
    <location>
        <position position="14"/>
    </location>
    <ligand>
        <name>a menaquinone</name>
        <dbReference type="ChEBI" id="CHEBI:16374"/>
    </ligand>
</feature>
<feature type="binding site" evidence="1">
    <location>
        <position position="58"/>
    </location>
    <ligand>
        <name>[2Fe-2S] cluster</name>
        <dbReference type="ChEBI" id="CHEBI:190135"/>
    </ligand>
</feature>
<feature type="binding site" evidence="1">
    <location>
        <position position="63"/>
    </location>
    <ligand>
        <name>[2Fe-2S] cluster</name>
        <dbReference type="ChEBI" id="CHEBI:190135"/>
    </ligand>
</feature>
<feature type="binding site" evidence="1">
    <location>
        <position position="66"/>
    </location>
    <ligand>
        <name>[2Fe-2S] cluster</name>
        <dbReference type="ChEBI" id="CHEBI:190135"/>
    </ligand>
</feature>
<feature type="binding site" evidence="1">
    <location>
        <position position="78"/>
    </location>
    <ligand>
        <name>[2Fe-2S] cluster</name>
        <dbReference type="ChEBI" id="CHEBI:190135"/>
    </ligand>
</feature>
<feature type="binding site" evidence="1">
    <location>
        <position position="160"/>
    </location>
    <ligand>
        <name>[4Fe-4S] cluster</name>
        <dbReference type="ChEBI" id="CHEBI:49883"/>
    </ligand>
</feature>
<feature type="binding site" evidence="1">
    <location>
        <position position="163"/>
    </location>
    <ligand>
        <name>[4Fe-4S] cluster</name>
        <dbReference type="ChEBI" id="CHEBI:49883"/>
    </ligand>
</feature>
<feature type="binding site" evidence="1">
    <location>
        <position position="166"/>
    </location>
    <ligand>
        <name>[4Fe-4S] cluster</name>
        <dbReference type="ChEBI" id="CHEBI:49883"/>
    </ligand>
</feature>
<feature type="binding site" evidence="1">
    <location>
        <position position="170"/>
    </location>
    <ligand>
        <name>[3Fe-4S] cluster</name>
        <dbReference type="ChEBI" id="CHEBI:21137"/>
    </ligand>
</feature>
<feature type="binding site" evidence="1">
    <location>
        <position position="216"/>
    </location>
    <ligand>
        <name>[3Fe-4S] cluster</name>
        <dbReference type="ChEBI" id="CHEBI:21137"/>
    </ligand>
</feature>
<feature type="binding site" evidence="1">
    <location>
        <position position="222"/>
    </location>
    <ligand>
        <name>[3Fe-4S] cluster</name>
        <dbReference type="ChEBI" id="CHEBI:21137"/>
    </ligand>
</feature>
<feature type="binding site" evidence="1">
    <location>
        <position position="226"/>
    </location>
    <ligand>
        <name>[4Fe-4S] cluster</name>
        <dbReference type="ChEBI" id="CHEBI:49883"/>
    </ligand>
</feature>
<feature type="binding site" evidence="1">
    <location>
        <begin position="237"/>
        <end position="240"/>
    </location>
    <ligand>
        <name>a menaquinone</name>
        <dbReference type="ChEBI" id="CHEBI:16374"/>
    </ligand>
</feature>
<gene>
    <name type="primary">frdB</name>
    <name type="ordered locus">HI_0834</name>
</gene>
<dbReference type="EC" id="1.3.5.1" evidence="1"/>
<dbReference type="EMBL" id="L42023">
    <property type="protein sequence ID" value="AAC22492.1"/>
    <property type="molecule type" value="Genomic_DNA"/>
</dbReference>
<dbReference type="RefSeq" id="NP_438994.1">
    <property type="nucleotide sequence ID" value="NC_000907.1"/>
</dbReference>
<dbReference type="SMR" id="P44893"/>
<dbReference type="STRING" id="71421.HI_0834"/>
<dbReference type="EnsemblBacteria" id="AAC22492">
    <property type="protein sequence ID" value="AAC22492"/>
    <property type="gene ID" value="HI_0834"/>
</dbReference>
<dbReference type="KEGG" id="hin:HI_0834"/>
<dbReference type="PATRIC" id="fig|71421.8.peg.875"/>
<dbReference type="eggNOG" id="COG0479">
    <property type="taxonomic scope" value="Bacteria"/>
</dbReference>
<dbReference type="HOGENOM" id="CLU_044838_3_2_6"/>
<dbReference type="OrthoDB" id="9804391at2"/>
<dbReference type="PhylomeDB" id="P44893"/>
<dbReference type="BioCyc" id="HINF71421:G1GJ1-875-MONOMER"/>
<dbReference type="Proteomes" id="UP000000579">
    <property type="component" value="Chromosome"/>
</dbReference>
<dbReference type="GO" id="GO:0045283">
    <property type="term" value="C:fumarate reductase complex"/>
    <property type="evidence" value="ECO:0000318"/>
    <property type="project" value="GO_Central"/>
</dbReference>
<dbReference type="GO" id="GO:0005886">
    <property type="term" value="C:plasma membrane"/>
    <property type="evidence" value="ECO:0007669"/>
    <property type="project" value="UniProtKB-SubCell"/>
</dbReference>
<dbReference type="GO" id="GO:0051537">
    <property type="term" value="F:2 iron, 2 sulfur cluster binding"/>
    <property type="evidence" value="ECO:0007669"/>
    <property type="project" value="UniProtKB-KW"/>
</dbReference>
<dbReference type="GO" id="GO:0051538">
    <property type="term" value="F:3 iron, 4 sulfur cluster binding"/>
    <property type="evidence" value="ECO:0007669"/>
    <property type="project" value="UniProtKB-KW"/>
</dbReference>
<dbReference type="GO" id="GO:0051539">
    <property type="term" value="F:4 iron, 4 sulfur cluster binding"/>
    <property type="evidence" value="ECO:0007669"/>
    <property type="project" value="UniProtKB-KW"/>
</dbReference>
<dbReference type="GO" id="GO:0009055">
    <property type="term" value="F:electron transfer activity"/>
    <property type="evidence" value="ECO:0007669"/>
    <property type="project" value="InterPro"/>
</dbReference>
<dbReference type="GO" id="GO:0046872">
    <property type="term" value="F:metal ion binding"/>
    <property type="evidence" value="ECO:0007669"/>
    <property type="project" value="UniProtKB-KW"/>
</dbReference>
<dbReference type="GO" id="GO:0008177">
    <property type="term" value="F:succinate dehydrogenase (quinone) activity"/>
    <property type="evidence" value="ECO:0007669"/>
    <property type="project" value="RHEA"/>
</dbReference>
<dbReference type="GO" id="GO:0009061">
    <property type="term" value="P:anaerobic respiration"/>
    <property type="evidence" value="ECO:0000318"/>
    <property type="project" value="GO_Central"/>
</dbReference>
<dbReference type="GO" id="GO:0006099">
    <property type="term" value="P:tricarboxylic acid cycle"/>
    <property type="evidence" value="ECO:0007669"/>
    <property type="project" value="UniProtKB-KW"/>
</dbReference>
<dbReference type="FunFam" id="1.10.1060.10:FF:000002">
    <property type="entry name" value="Succinate dehydrogenase iron-sulfur subunit"/>
    <property type="match status" value="1"/>
</dbReference>
<dbReference type="FunFam" id="3.10.20.30:FF:000009">
    <property type="entry name" value="Succinate dehydrogenase iron-sulfur subunit"/>
    <property type="match status" value="1"/>
</dbReference>
<dbReference type="Gene3D" id="3.10.20.30">
    <property type="match status" value="1"/>
</dbReference>
<dbReference type="Gene3D" id="1.10.1060.10">
    <property type="entry name" value="Alpha-helical ferredoxin"/>
    <property type="match status" value="1"/>
</dbReference>
<dbReference type="InterPro" id="IPR036010">
    <property type="entry name" value="2Fe-2S_ferredoxin-like_sf"/>
</dbReference>
<dbReference type="InterPro" id="IPR001041">
    <property type="entry name" value="2Fe-2S_ferredoxin-type"/>
</dbReference>
<dbReference type="InterPro" id="IPR006058">
    <property type="entry name" value="2Fe2S_fd_BS"/>
</dbReference>
<dbReference type="InterPro" id="IPR017896">
    <property type="entry name" value="4Fe4S_Fe-S-bd"/>
</dbReference>
<dbReference type="InterPro" id="IPR017900">
    <property type="entry name" value="4Fe4S_Fe_S_CS"/>
</dbReference>
<dbReference type="InterPro" id="IPR012675">
    <property type="entry name" value="Beta-grasp_dom_sf"/>
</dbReference>
<dbReference type="InterPro" id="IPR009051">
    <property type="entry name" value="Helical_ferredxn"/>
</dbReference>
<dbReference type="InterPro" id="IPR004489">
    <property type="entry name" value="Succ_DH/fum_Rdtase_Fe-S"/>
</dbReference>
<dbReference type="InterPro" id="IPR025192">
    <property type="entry name" value="Succ_DH/fum_Rdtase_N"/>
</dbReference>
<dbReference type="NCBIfam" id="TIGR00384">
    <property type="entry name" value="dhsB"/>
    <property type="match status" value="1"/>
</dbReference>
<dbReference type="NCBIfam" id="NF004616">
    <property type="entry name" value="PRK05950.1"/>
    <property type="match status" value="1"/>
</dbReference>
<dbReference type="NCBIfam" id="NF009051">
    <property type="entry name" value="PRK12385.1"/>
    <property type="match status" value="1"/>
</dbReference>
<dbReference type="PANTHER" id="PTHR43551">
    <property type="entry name" value="FUMARATE REDUCTASE IRON-SULFUR SUBUNIT"/>
    <property type="match status" value="1"/>
</dbReference>
<dbReference type="PANTHER" id="PTHR43551:SF2">
    <property type="entry name" value="FUMARATE REDUCTASE IRON-SULFUR SUBUNIT"/>
    <property type="match status" value="1"/>
</dbReference>
<dbReference type="Pfam" id="PF13085">
    <property type="entry name" value="Fer2_3"/>
    <property type="match status" value="1"/>
</dbReference>
<dbReference type="Pfam" id="PF13237">
    <property type="entry name" value="Fer4_10"/>
    <property type="match status" value="1"/>
</dbReference>
<dbReference type="SUPFAM" id="SSF54292">
    <property type="entry name" value="2Fe-2S ferredoxin-like"/>
    <property type="match status" value="1"/>
</dbReference>
<dbReference type="SUPFAM" id="SSF46548">
    <property type="entry name" value="alpha-helical ferredoxin"/>
    <property type="match status" value="1"/>
</dbReference>
<dbReference type="PROSITE" id="PS00197">
    <property type="entry name" value="2FE2S_FER_1"/>
    <property type="match status" value="1"/>
</dbReference>
<dbReference type="PROSITE" id="PS51085">
    <property type="entry name" value="2FE2S_FER_2"/>
    <property type="match status" value="1"/>
</dbReference>
<dbReference type="PROSITE" id="PS00198">
    <property type="entry name" value="4FE4S_FER_1"/>
    <property type="match status" value="1"/>
</dbReference>
<dbReference type="PROSITE" id="PS51379">
    <property type="entry name" value="4FE4S_FER_2"/>
    <property type="match status" value="1"/>
</dbReference>
<protein>
    <recommendedName>
        <fullName>Fumarate reductase iron-sulfur subunit</fullName>
        <ecNumber evidence="1">1.3.5.1</ecNumber>
    </recommendedName>
    <alternativeName>
        <fullName>Quinol-fumarate reductase iron-sulfur subunit</fullName>
        <shortName>QFR iron-sulfur subunit</shortName>
    </alternativeName>
</protein>
<comment type="catalytic activity">
    <reaction evidence="1">
        <text>a quinone + succinate = fumarate + a quinol</text>
        <dbReference type="Rhea" id="RHEA:40523"/>
        <dbReference type="ChEBI" id="CHEBI:24646"/>
        <dbReference type="ChEBI" id="CHEBI:29806"/>
        <dbReference type="ChEBI" id="CHEBI:30031"/>
        <dbReference type="ChEBI" id="CHEBI:132124"/>
        <dbReference type="EC" id="1.3.5.1"/>
    </reaction>
</comment>
<comment type="catalytic activity">
    <reaction evidence="1">
        <text>a menaquinone + succinate = a menaquinol + fumarate</text>
        <dbReference type="Rhea" id="RHEA:27834"/>
        <dbReference type="Rhea" id="RHEA-COMP:9537"/>
        <dbReference type="Rhea" id="RHEA-COMP:9539"/>
        <dbReference type="ChEBI" id="CHEBI:16374"/>
        <dbReference type="ChEBI" id="CHEBI:18151"/>
        <dbReference type="ChEBI" id="CHEBI:29806"/>
        <dbReference type="ChEBI" id="CHEBI:30031"/>
        <dbReference type="EC" id="1.3.5.1"/>
    </reaction>
</comment>
<comment type="cofactor">
    <cofactor evidence="1">
        <name>[2Fe-2S] cluster</name>
        <dbReference type="ChEBI" id="CHEBI:190135"/>
    </cofactor>
    <text evidence="1">Binds 1 [2Fe-2S] cluster.</text>
</comment>
<comment type="cofactor">
    <cofactor evidence="1">
        <name>[3Fe-4S] cluster</name>
        <dbReference type="ChEBI" id="CHEBI:21137"/>
    </cofactor>
    <text evidence="1">Binds 1 [3Fe-4S] cluster.</text>
</comment>
<comment type="cofactor">
    <cofactor evidence="1">
        <name>[4Fe-4S] cluster</name>
        <dbReference type="ChEBI" id="CHEBI:49883"/>
    </cofactor>
    <text evidence="1">Binds 1 [4Fe-4S] cluster.</text>
</comment>
<comment type="subunit">
    <text evidence="1">Fumarate dehydrogenase forms part of an enzyme complex containing four subunits: a flavoprotein, an iron-sulfur, and two hydrophobic anchor proteins.</text>
</comment>
<comment type="subcellular location">
    <subcellularLocation>
        <location evidence="1">Cell inner membrane</location>
        <topology evidence="1">Peripheral membrane protein</topology>
        <orientation evidence="1">Cytoplasmic side</orientation>
    </subcellularLocation>
</comment>
<comment type="similarity">
    <text evidence="4">Belongs to the succinate dehydrogenase/fumarate reductase iron-sulfur protein family.</text>
</comment>